<feature type="chain" id="PRO_0000052082" description="Cytochrome P450 71B4">
    <location>
        <begin position="1"/>
        <end position="504"/>
    </location>
</feature>
<feature type="transmembrane region" description="Helical" evidence="2">
    <location>
        <begin position="1"/>
        <end position="21"/>
    </location>
</feature>
<feature type="binding site" description="axial binding residue" evidence="1">
    <location>
        <position position="446"/>
    </location>
    <ligand>
        <name>heme</name>
        <dbReference type="ChEBI" id="CHEBI:30413"/>
    </ligand>
    <ligandPart>
        <name>Fe</name>
        <dbReference type="ChEBI" id="CHEBI:18248"/>
    </ligandPart>
</feature>
<feature type="sequence conflict" description="In Ref. 1; BAA28535." evidence="3" ref="1">
    <original>F</original>
    <variation>C</variation>
    <location>
        <position position="434"/>
    </location>
</feature>
<evidence type="ECO:0000250" key="1"/>
<evidence type="ECO:0000255" key="2"/>
<evidence type="ECO:0000305" key="3"/>
<proteinExistence type="evidence at transcript level"/>
<sequence>MVSLLSFFLLLLVPIFFLLIFTKKIKESKQNLPPGPAKLPIIGNLHQLQGLLHKCLHDLSKKHGPVMHLRLGFAPMVVISSSEAAEEALKTHDLECCSRPITMASRVFSRNGKDIGFGVYGDEWRELRKLSVREFFSVKKVQSFKYIREEENDLMIKKLKELASKQSPVDLSKILFGLTASIIFRTAFGQSFFDNKHVDQESIKELMFESLSNMTFRFSDFFPTAGLKWFIGFVSGQHKRLYNVFNRVDTFFNHIVDDHHSKKATQDRPDMVDAILDMIDNEQQYASFKLTVDHLKGVLSNIYHAGIDTSAITLIWAMAELVRNPRVMKKAQDEIRTCIGIKQEGRIMEEDLDKLQYLKLVVKETLRLHPAAPLLLPRETMADIKIQGYDIPQKRALLVNAWSIGRDPESWKNPEEFNPERFIDCPVDYKGHSFELLPFGSGRRICPGIAMAIATIELGLLNLLYFFDWNMPEKKKDMDMEEAGDLTVDKKVPLELLPVIRISL</sequence>
<protein>
    <recommendedName>
        <fullName>Cytochrome P450 71B4</fullName>
        <ecNumber>1.14.-.-</ecNumber>
    </recommendedName>
</protein>
<comment type="cofactor">
    <cofactor evidence="1">
        <name>heme</name>
        <dbReference type="ChEBI" id="CHEBI:30413"/>
    </cofactor>
</comment>
<comment type="subcellular location">
    <subcellularLocation>
        <location evidence="3">Membrane</location>
        <topology evidence="3">Single-pass membrane protein</topology>
    </subcellularLocation>
</comment>
<comment type="similarity">
    <text evidence="3">Belongs to the cytochrome P450 family.</text>
</comment>
<gene>
    <name type="primary">CYP71B4</name>
    <name type="ordered locus">At3g26280</name>
    <name type="ORF">MTC11.21</name>
</gene>
<keyword id="KW-0349">Heme</keyword>
<keyword id="KW-0408">Iron</keyword>
<keyword id="KW-0472">Membrane</keyword>
<keyword id="KW-0479">Metal-binding</keyword>
<keyword id="KW-0503">Monooxygenase</keyword>
<keyword id="KW-0560">Oxidoreductase</keyword>
<keyword id="KW-1185">Reference proteome</keyword>
<keyword id="KW-0812">Transmembrane</keyword>
<keyword id="KW-1133">Transmembrane helix</keyword>
<reference key="1">
    <citation type="journal article" date="1998" name="Plant Mol. Biol.">
        <title>Cytochrome P450 superfamily in Arabidopsis thaliana: isolation of cDNAs, differential expression, and RFLP mapping of multiple cytochromes P450.</title>
        <authorList>
            <person name="Mizutani M."/>
            <person name="Ward E."/>
            <person name="Ohta D."/>
        </authorList>
    </citation>
    <scope>NUCLEOTIDE SEQUENCE [MRNA]</scope>
    <source>
        <strain>cv. Columbia</strain>
        <tissue>Seedling</tissue>
    </source>
</reference>
<reference key="2">
    <citation type="journal article" date="2000" name="DNA Res.">
        <title>Structural analysis of Arabidopsis thaliana chromosome 3. I. Sequence features of the regions of 4,504,864 bp covered by sixty P1 and TAC clones.</title>
        <authorList>
            <person name="Sato S."/>
            <person name="Nakamura Y."/>
            <person name="Kaneko T."/>
            <person name="Katoh T."/>
            <person name="Asamizu E."/>
            <person name="Tabata S."/>
        </authorList>
    </citation>
    <scope>NUCLEOTIDE SEQUENCE [LARGE SCALE GENOMIC DNA]</scope>
    <source>
        <strain>cv. Columbia</strain>
    </source>
</reference>
<reference key="3">
    <citation type="journal article" date="2017" name="Plant J.">
        <title>Araport11: a complete reannotation of the Arabidopsis thaliana reference genome.</title>
        <authorList>
            <person name="Cheng C.Y."/>
            <person name="Krishnakumar V."/>
            <person name="Chan A.P."/>
            <person name="Thibaud-Nissen F."/>
            <person name="Schobel S."/>
            <person name="Town C.D."/>
        </authorList>
    </citation>
    <scope>GENOME REANNOTATION</scope>
    <source>
        <strain>cv. Columbia</strain>
    </source>
</reference>
<reference key="4">
    <citation type="journal article" date="2003" name="Science">
        <title>Empirical analysis of transcriptional activity in the Arabidopsis genome.</title>
        <authorList>
            <person name="Yamada K."/>
            <person name="Lim J."/>
            <person name="Dale J.M."/>
            <person name="Chen H."/>
            <person name="Shinn P."/>
            <person name="Palm C.J."/>
            <person name="Southwick A.M."/>
            <person name="Wu H.C."/>
            <person name="Kim C.J."/>
            <person name="Nguyen M."/>
            <person name="Pham P.K."/>
            <person name="Cheuk R.F."/>
            <person name="Karlin-Newmann G."/>
            <person name="Liu S.X."/>
            <person name="Lam B."/>
            <person name="Sakano H."/>
            <person name="Wu T."/>
            <person name="Yu G."/>
            <person name="Miranda M."/>
            <person name="Quach H.L."/>
            <person name="Tripp M."/>
            <person name="Chang C.H."/>
            <person name="Lee J.M."/>
            <person name="Toriumi M.J."/>
            <person name="Chan M.M."/>
            <person name="Tang C.C."/>
            <person name="Onodera C.S."/>
            <person name="Deng J.M."/>
            <person name="Akiyama K."/>
            <person name="Ansari Y."/>
            <person name="Arakawa T."/>
            <person name="Banh J."/>
            <person name="Banno F."/>
            <person name="Bowser L."/>
            <person name="Brooks S.Y."/>
            <person name="Carninci P."/>
            <person name="Chao Q."/>
            <person name="Choy N."/>
            <person name="Enju A."/>
            <person name="Goldsmith A.D."/>
            <person name="Gurjal M."/>
            <person name="Hansen N.F."/>
            <person name="Hayashizaki Y."/>
            <person name="Johnson-Hopson C."/>
            <person name="Hsuan V.W."/>
            <person name="Iida K."/>
            <person name="Karnes M."/>
            <person name="Khan S."/>
            <person name="Koesema E."/>
            <person name="Ishida J."/>
            <person name="Jiang P.X."/>
            <person name="Jones T."/>
            <person name="Kawai J."/>
            <person name="Kamiya A."/>
            <person name="Meyers C."/>
            <person name="Nakajima M."/>
            <person name="Narusaka M."/>
            <person name="Seki M."/>
            <person name="Sakurai T."/>
            <person name="Satou M."/>
            <person name="Tamse R."/>
            <person name="Vaysberg M."/>
            <person name="Wallender E.K."/>
            <person name="Wong C."/>
            <person name="Yamamura Y."/>
            <person name="Yuan S."/>
            <person name="Shinozaki K."/>
            <person name="Davis R.W."/>
            <person name="Theologis A."/>
            <person name="Ecker J.R."/>
        </authorList>
    </citation>
    <scope>NUCLEOTIDE SEQUENCE [LARGE SCALE MRNA]</scope>
    <source>
        <strain>cv. Columbia</strain>
    </source>
</reference>
<accession>O65786</accession>
<accession>Q9LTL1</accession>
<organism>
    <name type="scientific">Arabidopsis thaliana</name>
    <name type="common">Mouse-ear cress</name>
    <dbReference type="NCBI Taxonomy" id="3702"/>
    <lineage>
        <taxon>Eukaryota</taxon>
        <taxon>Viridiplantae</taxon>
        <taxon>Streptophyta</taxon>
        <taxon>Embryophyta</taxon>
        <taxon>Tracheophyta</taxon>
        <taxon>Spermatophyta</taxon>
        <taxon>Magnoliopsida</taxon>
        <taxon>eudicotyledons</taxon>
        <taxon>Gunneridae</taxon>
        <taxon>Pentapetalae</taxon>
        <taxon>rosids</taxon>
        <taxon>malvids</taxon>
        <taxon>Brassicales</taxon>
        <taxon>Brassicaceae</taxon>
        <taxon>Camelineae</taxon>
        <taxon>Arabidopsis</taxon>
    </lineage>
</organism>
<name>C71B4_ARATH</name>
<dbReference type="EC" id="1.14.-.-"/>
<dbReference type="EMBL" id="D78603">
    <property type="protein sequence ID" value="BAA28535.1"/>
    <property type="molecule type" value="mRNA"/>
</dbReference>
<dbReference type="EMBL" id="AB024038">
    <property type="protein sequence ID" value="BAB02451.1"/>
    <property type="molecule type" value="Genomic_DNA"/>
</dbReference>
<dbReference type="EMBL" id="CP002686">
    <property type="protein sequence ID" value="AEE77141.1"/>
    <property type="molecule type" value="Genomic_DNA"/>
</dbReference>
<dbReference type="EMBL" id="AY090254">
    <property type="protein sequence ID" value="AAL90915.1"/>
    <property type="molecule type" value="mRNA"/>
</dbReference>
<dbReference type="EMBL" id="AY149951">
    <property type="protein sequence ID" value="AAN31105.1"/>
    <property type="molecule type" value="mRNA"/>
</dbReference>
<dbReference type="PIR" id="T52171">
    <property type="entry name" value="T52171"/>
</dbReference>
<dbReference type="RefSeq" id="NP_189259.1">
    <property type="nucleotide sequence ID" value="NM_113535.2"/>
</dbReference>
<dbReference type="SMR" id="O65786"/>
<dbReference type="BioGRID" id="7562">
    <property type="interactions" value="6"/>
</dbReference>
<dbReference type="FunCoup" id="O65786">
    <property type="interactions" value="459"/>
</dbReference>
<dbReference type="IntAct" id="O65786">
    <property type="interactions" value="6"/>
</dbReference>
<dbReference type="STRING" id="3702.O65786"/>
<dbReference type="PaxDb" id="3702-AT3G26280.1"/>
<dbReference type="ProteomicsDB" id="240494"/>
<dbReference type="EnsemblPlants" id="AT3G26280.1">
    <property type="protein sequence ID" value="AT3G26280.1"/>
    <property type="gene ID" value="AT3G26280"/>
</dbReference>
<dbReference type="GeneID" id="822231"/>
<dbReference type="Gramene" id="AT3G26280.1">
    <property type="protein sequence ID" value="AT3G26280.1"/>
    <property type="gene ID" value="AT3G26280"/>
</dbReference>
<dbReference type="KEGG" id="ath:AT3G26280"/>
<dbReference type="Araport" id="AT3G26280"/>
<dbReference type="TAIR" id="AT3G26280">
    <property type="gene designation" value="CYP71B4"/>
</dbReference>
<dbReference type="eggNOG" id="KOG0156">
    <property type="taxonomic scope" value="Eukaryota"/>
</dbReference>
<dbReference type="HOGENOM" id="CLU_001570_4_1_1"/>
<dbReference type="InParanoid" id="O65786"/>
<dbReference type="OMA" id="WINARRR"/>
<dbReference type="PhylomeDB" id="O65786"/>
<dbReference type="PRO" id="PR:O65786"/>
<dbReference type="Proteomes" id="UP000006548">
    <property type="component" value="Chromosome 3"/>
</dbReference>
<dbReference type="ExpressionAtlas" id="O65786">
    <property type="expression patterns" value="baseline and differential"/>
</dbReference>
<dbReference type="GO" id="GO:0016020">
    <property type="term" value="C:membrane"/>
    <property type="evidence" value="ECO:0007669"/>
    <property type="project" value="UniProtKB-SubCell"/>
</dbReference>
<dbReference type="GO" id="GO:0020037">
    <property type="term" value="F:heme binding"/>
    <property type="evidence" value="ECO:0007669"/>
    <property type="project" value="InterPro"/>
</dbReference>
<dbReference type="GO" id="GO:0005506">
    <property type="term" value="F:iron ion binding"/>
    <property type="evidence" value="ECO:0007669"/>
    <property type="project" value="InterPro"/>
</dbReference>
<dbReference type="GO" id="GO:0004497">
    <property type="term" value="F:monooxygenase activity"/>
    <property type="evidence" value="ECO:0007669"/>
    <property type="project" value="UniProtKB-KW"/>
</dbReference>
<dbReference type="GO" id="GO:0016705">
    <property type="term" value="F:oxidoreductase activity, acting on paired donors, with incorporation or reduction of molecular oxygen"/>
    <property type="evidence" value="ECO:0007669"/>
    <property type="project" value="InterPro"/>
</dbReference>
<dbReference type="CDD" id="cd11072">
    <property type="entry name" value="CYP71-like"/>
    <property type="match status" value="1"/>
</dbReference>
<dbReference type="FunFam" id="1.10.630.10:FF:000011">
    <property type="entry name" value="Cytochrome P450 83B1"/>
    <property type="match status" value="1"/>
</dbReference>
<dbReference type="Gene3D" id="1.10.630.10">
    <property type="entry name" value="Cytochrome P450"/>
    <property type="match status" value="1"/>
</dbReference>
<dbReference type="InterPro" id="IPR001128">
    <property type="entry name" value="Cyt_P450"/>
</dbReference>
<dbReference type="InterPro" id="IPR017972">
    <property type="entry name" value="Cyt_P450_CS"/>
</dbReference>
<dbReference type="InterPro" id="IPR002401">
    <property type="entry name" value="Cyt_P450_E_grp-I"/>
</dbReference>
<dbReference type="InterPro" id="IPR036396">
    <property type="entry name" value="Cyt_P450_sf"/>
</dbReference>
<dbReference type="InterPro" id="IPR050193">
    <property type="entry name" value="Cytochrome_P450_71"/>
</dbReference>
<dbReference type="PANTHER" id="PTHR47956">
    <property type="entry name" value="CYTOCHROME P450 71B11-RELATED"/>
    <property type="match status" value="1"/>
</dbReference>
<dbReference type="PANTHER" id="PTHR47956:SF5">
    <property type="entry name" value="CYTOCHROME P450 71B25-RELATED"/>
    <property type="match status" value="1"/>
</dbReference>
<dbReference type="Pfam" id="PF00067">
    <property type="entry name" value="p450"/>
    <property type="match status" value="1"/>
</dbReference>
<dbReference type="PRINTS" id="PR00463">
    <property type="entry name" value="EP450I"/>
</dbReference>
<dbReference type="PRINTS" id="PR00385">
    <property type="entry name" value="P450"/>
</dbReference>
<dbReference type="SUPFAM" id="SSF48264">
    <property type="entry name" value="Cytochrome P450"/>
    <property type="match status" value="1"/>
</dbReference>
<dbReference type="PROSITE" id="PS00086">
    <property type="entry name" value="CYTOCHROME_P450"/>
    <property type="match status" value="1"/>
</dbReference>